<dbReference type="EMBL" id="BX359005">
    <property type="status" value="NOT_ANNOTATED_CDS"/>
    <property type="molecule type" value="mRNA"/>
</dbReference>
<dbReference type="EMBL" id="AK313892">
    <property type="protein sequence ID" value="BAG36615.1"/>
    <property type="molecule type" value="mRNA"/>
</dbReference>
<dbReference type="EMBL" id="AP003032">
    <property type="status" value="NOT_ANNOTATED_CDS"/>
    <property type="molecule type" value="Genomic_DNA"/>
</dbReference>
<dbReference type="EMBL" id="CH471076">
    <property type="protein sequence ID" value="EAW75043.1"/>
    <property type="molecule type" value="Genomic_DNA"/>
</dbReference>
<dbReference type="EMBL" id="BC001062">
    <property type="protein sequence ID" value="AAH01062.1"/>
    <property type="status" value="ALT_INIT"/>
    <property type="molecule type" value="mRNA"/>
</dbReference>
<dbReference type="EMBL" id="BC001929">
    <property type="protein sequence ID" value="AAH01929.1"/>
    <property type="status" value="ALT_INIT"/>
    <property type="molecule type" value="mRNA"/>
</dbReference>
<dbReference type="CCDS" id="CCDS60908.1">
    <molecule id="Q9BQ13-2"/>
</dbReference>
<dbReference type="CCDS" id="CCDS8255.2">
    <molecule id="Q9BQ13-1"/>
</dbReference>
<dbReference type="RefSeq" id="NP_001269335.1">
    <molecule id="Q9BQ13-2"/>
    <property type="nucleotide sequence ID" value="NM_001282406.2"/>
</dbReference>
<dbReference type="RefSeq" id="NP_076419.2">
    <molecule id="Q9BQ13-1"/>
    <property type="nucleotide sequence ID" value="NM_023930.4"/>
</dbReference>
<dbReference type="SMR" id="Q9BQ13"/>
<dbReference type="BioGRID" id="122436">
    <property type="interactions" value="21"/>
</dbReference>
<dbReference type="FunCoup" id="Q9BQ13">
    <property type="interactions" value="32"/>
</dbReference>
<dbReference type="IntAct" id="Q9BQ13">
    <property type="interactions" value="16"/>
</dbReference>
<dbReference type="STRING" id="9606.ENSP00000316482"/>
<dbReference type="iPTMnet" id="Q9BQ13"/>
<dbReference type="PhosphoSitePlus" id="Q9BQ13"/>
<dbReference type="BioMuta" id="KCTD14"/>
<dbReference type="DMDM" id="251757290"/>
<dbReference type="jPOST" id="Q9BQ13"/>
<dbReference type="MassIVE" id="Q9BQ13"/>
<dbReference type="PaxDb" id="9606-ENSP00000316482"/>
<dbReference type="PeptideAtlas" id="Q9BQ13"/>
<dbReference type="ProteomicsDB" id="3417"/>
<dbReference type="ProteomicsDB" id="78608">
    <molecule id="Q9BQ13-1"/>
</dbReference>
<dbReference type="Pumba" id="Q9BQ13"/>
<dbReference type="Antibodypedia" id="45177">
    <property type="antibodies" value="220 antibodies from 17 providers"/>
</dbReference>
<dbReference type="DNASU" id="65987"/>
<dbReference type="Ensembl" id="ENST00000353172.6">
    <molecule id="Q9BQ13-1"/>
    <property type="protein sequence ID" value="ENSP00000316482.5"/>
    <property type="gene ID" value="ENSG00000151364.17"/>
</dbReference>
<dbReference type="Ensembl" id="ENST00000533144.1">
    <molecule id="Q9BQ13-2"/>
    <property type="protein sequence ID" value="ENSP00000431155.1"/>
    <property type="gene ID" value="ENSG00000151364.17"/>
</dbReference>
<dbReference type="GeneID" id="65987"/>
<dbReference type="KEGG" id="hsa:65987"/>
<dbReference type="MANE-Select" id="ENST00000353172.6">
    <property type="protein sequence ID" value="ENSP00000316482.5"/>
    <property type="RefSeq nucleotide sequence ID" value="NM_023930.4"/>
    <property type="RefSeq protein sequence ID" value="NP_076419.2"/>
</dbReference>
<dbReference type="UCSC" id="uc001oyw.5">
    <molecule id="Q9BQ13-1"/>
    <property type="organism name" value="human"/>
</dbReference>
<dbReference type="AGR" id="HGNC:23295"/>
<dbReference type="CTD" id="65987"/>
<dbReference type="GeneCards" id="KCTD14"/>
<dbReference type="HGNC" id="HGNC:23295">
    <property type="gene designation" value="KCTD14"/>
</dbReference>
<dbReference type="HPA" id="ENSG00000151364">
    <property type="expression patterns" value="Low tissue specificity"/>
</dbReference>
<dbReference type="neXtProt" id="NX_Q9BQ13"/>
<dbReference type="OpenTargets" id="ENSG00000151364"/>
<dbReference type="PharmGKB" id="PA134875104"/>
<dbReference type="VEuPathDB" id="HostDB:ENSG00000151364"/>
<dbReference type="eggNOG" id="KOG2723">
    <property type="taxonomic scope" value="Eukaryota"/>
</dbReference>
<dbReference type="GeneTree" id="ENSGT00940000160762"/>
<dbReference type="HOGENOM" id="CLU_070345_1_0_1"/>
<dbReference type="InParanoid" id="Q9BQ13"/>
<dbReference type="OMA" id="NVGGEMY"/>
<dbReference type="OrthoDB" id="2414723at2759"/>
<dbReference type="PAN-GO" id="Q9BQ13">
    <property type="GO annotations" value="0 GO annotations based on evolutionary models"/>
</dbReference>
<dbReference type="PhylomeDB" id="Q9BQ13"/>
<dbReference type="TreeFam" id="TF315332"/>
<dbReference type="PathwayCommons" id="Q9BQ13"/>
<dbReference type="SignaLink" id="Q9BQ13"/>
<dbReference type="BioGRID-ORCS" id="65987">
    <property type="hits" value="22 hits in 1152 CRISPR screens"/>
</dbReference>
<dbReference type="GenomeRNAi" id="65987"/>
<dbReference type="Pharos" id="Q9BQ13">
    <property type="development level" value="Tdark"/>
</dbReference>
<dbReference type="PRO" id="PR:Q9BQ13"/>
<dbReference type="Proteomes" id="UP000005640">
    <property type="component" value="Chromosome 11"/>
</dbReference>
<dbReference type="RNAct" id="Q9BQ13">
    <property type="molecule type" value="protein"/>
</dbReference>
<dbReference type="Bgee" id="ENSG00000151364">
    <property type="expression patterns" value="Expressed in parotid gland and 138 other cell types or tissues"/>
</dbReference>
<dbReference type="GO" id="GO:0051260">
    <property type="term" value="P:protein homooligomerization"/>
    <property type="evidence" value="ECO:0007669"/>
    <property type="project" value="InterPro"/>
</dbReference>
<dbReference type="CDD" id="cd18371">
    <property type="entry name" value="BTB_POZ_KCTD14"/>
    <property type="match status" value="1"/>
</dbReference>
<dbReference type="Gene3D" id="3.30.710.10">
    <property type="entry name" value="Potassium Channel Kv1.1, Chain A"/>
    <property type="match status" value="1"/>
</dbReference>
<dbReference type="InterPro" id="IPR000210">
    <property type="entry name" value="BTB/POZ_dom"/>
</dbReference>
<dbReference type="InterPro" id="IPR011333">
    <property type="entry name" value="SKP1/BTB/POZ_sf"/>
</dbReference>
<dbReference type="InterPro" id="IPR003131">
    <property type="entry name" value="T1-type_BTB"/>
</dbReference>
<dbReference type="PANTHER" id="PTHR13099:SF0">
    <property type="entry name" value="NADH DEHYDROGENASE [UBIQUINONE] 1 SUBUNIT C2-RELATED"/>
    <property type="match status" value="1"/>
</dbReference>
<dbReference type="PANTHER" id="PTHR13099">
    <property type="entry name" value="NADH-UBIQUINONE OXIDOREDUCTASE SUBUNIT B14.5B"/>
    <property type="match status" value="1"/>
</dbReference>
<dbReference type="Pfam" id="PF02214">
    <property type="entry name" value="BTB_2"/>
    <property type="match status" value="1"/>
</dbReference>
<dbReference type="SMART" id="SM00225">
    <property type="entry name" value="BTB"/>
    <property type="match status" value="1"/>
</dbReference>
<dbReference type="SUPFAM" id="SSF54695">
    <property type="entry name" value="POZ domain"/>
    <property type="match status" value="1"/>
</dbReference>
<accession>Q9BQ13</accession>
<accession>B2R9R8</accession>
<reference key="1">
    <citation type="submission" date="2003-04" db="EMBL/GenBank/DDBJ databases">
        <title>Full-length cDNA libraries and normalization.</title>
        <authorList>
            <person name="Li W.B."/>
            <person name="Gruber C."/>
            <person name="Jessee J."/>
            <person name="Polayes D."/>
        </authorList>
    </citation>
    <scope>NUCLEOTIDE SEQUENCE [LARGE SCALE MRNA] (ISOFORM 1)</scope>
    <source>
        <tissue>Placenta</tissue>
    </source>
</reference>
<reference key="2">
    <citation type="journal article" date="2004" name="Nat. Genet.">
        <title>Complete sequencing and characterization of 21,243 full-length human cDNAs.</title>
        <authorList>
            <person name="Ota T."/>
            <person name="Suzuki Y."/>
            <person name="Nishikawa T."/>
            <person name="Otsuki T."/>
            <person name="Sugiyama T."/>
            <person name="Irie R."/>
            <person name="Wakamatsu A."/>
            <person name="Hayashi K."/>
            <person name="Sato H."/>
            <person name="Nagai K."/>
            <person name="Kimura K."/>
            <person name="Makita H."/>
            <person name="Sekine M."/>
            <person name="Obayashi M."/>
            <person name="Nishi T."/>
            <person name="Shibahara T."/>
            <person name="Tanaka T."/>
            <person name="Ishii S."/>
            <person name="Yamamoto J."/>
            <person name="Saito K."/>
            <person name="Kawai Y."/>
            <person name="Isono Y."/>
            <person name="Nakamura Y."/>
            <person name="Nagahari K."/>
            <person name="Murakami K."/>
            <person name="Yasuda T."/>
            <person name="Iwayanagi T."/>
            <person name="Wagatsuma M."/>
            <person name="Shiratori A."/>
            <person name="Sudo H."/>
            <person name="Hosoiri T."/>
            <person name="Kaku Y."/>
            <person name="Kodaira H."/>
            <person name="Kondo H."/>
            <person name="Sugawara M."/>
            <person name="Takahashi M."/>
            <person name="Kanda K."/>
            <person name="Yokoi T."/>
            <person name="Furuya T."/>
            <person name="Kikkawa E."/>
            <person name="Omura Y."/>
            <person name="Abe K."/>
            <person name="Kamihara K."/>
            <person name="Katsuta N."/>
            <person name="Sato K."/>
            <person name="Tanikawa M."/>
            <person name="Yamazaki M."/>
            <person name="Ninomiya K."/>
            <person name="Ishibashi T."/>
            <person name="Yamashita H."/>
            <person name="Murakawa K."/>
            <person name="Fujimori K."/>
            <person name="Tanai H."/>
            <person name="Kimata M."/>
            <person name="Watanabe M."/>
            <person name="Hiraoka S."/>
            <person name="Chiba Y."/>
            <person name="Ishida S."/>
            <person name="Ono Y."/>
            <person name="Takiguchi S."/>
            <person name="Watanabe S."/>
            <person name="Yosida M."/>
            <person name="Hotuta T."/>
            <person name="Kusano J."/>
            <person name="Kanehori K."/>
            <person name="Takahashi-Fujii A."/>
            <person name="Hara H."/>
            <person name="Tanase T.-O."/>
            <person name="Nomura Y."/>
            <person name="Togiya S."/>
            <person name="Komai F."/>
            <person name="Hara R."/>
            <person name="Takeuchi K."/>
            <person name="Arita M."/>
            <person name="Imose N."/>
            <person name="Musashino K."/>
            <person name="Yuuki H."/>
            <person name="Oshima A."/>
            <person name="Sasaki N."/>
            <person name="Aotsuka S."/>
            <person name="Yoshikawa Y."/>
            <person name="Matsunawa H."/>
            <person name="Ichihara T."/>
            <person name="Shiohata N."/>
            <person name="Sano S."/>
            <person name="Moriya S."/>
            <person name="Momiyama H."/>
            <person name="Satoh N."/>
            <person name="Takami S."/>
            <person name="Terashima Y."/>
            <person name="Suzuki O."/>
            <person name="Nakagawa S."/>
            <person name="Senoh A."/>
            <person name="Mizoguchi H."/>
            <person name="Goto Y."/>
            <person name="Shimizu F."/>
            <person name="Wakebe H."/>
            <person name="Hishigaki H."/>
            <person name="Watanabe T."/>
            <person name="Sugiyama A."/>
            <person name="Takemoto M."/>
            <person name="Kawakami B."/>
            <person name="Yamazaki M."/>
            <person name="Watanabe K."/>
            <person name="Kumagai A."/>
            <person name="Itakura S."/>
            <person name="Fukuzumi Y."/>
            <person name="Fujimori Y."/>
            <person name="Komiyama M."/>
            <person name="Tashiro H."/>
            <person name="Tanigami A."/>
            <person name="Fujiwara T."/>
            <person name="Ono T."/>
            <person name="Yamada K."/>
            <person name="Fujii Y."/>
            <person name="Ozaki K."/>
            <person name="Hirao M."/>
            <person name="Ohmori Y."/>
            <person name="Kawabata A."/>
            <person name="Hikiji T."/>
            <person name="Kobatake N."/>
            <person name="Inagaki H."/>
            <person name="Ikema Y."/>
            <person name="Okamoto S."/>
            <person name="Okitani R."/>
            <person name="Kawakami T."/>
            <person name="Noguchi S."/>
            <person name="Itoh T."/>
            <person name="Shigeta K."/>
            <person name="Senba T."/>
            <person name="Matsumura K."/>
            <person name="Nakajima Y."/>
            <person name="Mizuno T."/>
            <person name="Morinaga M."/>
            <person name="Sasaki M."/>
            <person name="Togashi T."/>
            <person name="Oyama M."/>
            <person name="Hata H."/>
            <person name="Watanabe M."/>
            <person name="Komatsu T."/>
            <person name="Mizushima-Sugano J."/>
            <person name="Satoh T."/>
            <person name="Shirai Y."/>
            <person name="Takahashi Y."/>
            <person name="Nakagawa K."/>
            <person name="Okumura K."/>
            <person name="Nagase T."/>
            <person name="Nomura N."/>
            <person name="Kikuchi H."/>
            <person name="Masuho Y."/>
            <person name="Yamashita R."/>
            <person name="Nakai K."/>
            <person name="Yada T."/>
            <person name="Nakamura Y."/>
            <person name="Ohara O."/>
            <person name="Isogai T."/>
            <person name="Sugano S."/>
        </authorList>
    </citation>
    <scope>NUCLEOTIDE SEQUENCE [LARGE SCALE MRNA] (ISOFORM 3B)</scope>
    <source>
        <tissue>Cerebellum</tissue>
    </source>
</reference>
<reference key="3">
    <citation type="journal article" date="2006" name="Nature">
        <title>Human chromosome 11 DNA sequence and analysis including novel gene identification.</title>
        <authorList>
            <person name="Taylor T.D."/>
            <person name="Noguchi H."/>
            <person name="Totoki Y."/>
            <person name="Toyoda A."/>
            <person name="Kuroki Y."/>
            <person name="Dewar K."/>
            <person name="Lloyd C."/>
            <person name="Itoh T."/>
            <person name="Takeda T."/>
            <person name="Kim D.-W."/>
            <person name="She X."/>
            <person name="Barlow K.F."/>
            <person name="Bloom T."/>
            <person name="Bruford E."/>
            <person name="Chang J.L."/>
            <person name="Cuomo C.A."/>
            <person name="Eichler E."/>
            <person name="FitzGerald M.G."/>
            <person name="Jaffe D.B."/>
            <person name="LaButti K."/>
            <person name="Nicol R."/>
            <person name="Park H.-S."/>
            <person name="Seaman C."/>
            <person name="Sougnez C."/>
            <person name="Yang X."/>
            <person name="Zimmer A.R."/>
            <person name="Zody M.C."/>
            <person name="Birren B.W."/>
            <person name="Nusbaum C."/>
            <person name="Fujiyama A."/>
            <person name="Hattori M."/>
            <person name="Rogers J."/>
            <person name="Lander E.S."/>
            <person name="Sakaki Y."/>
        </authorList>
    </citation>
    <scope>NUCLEOTIDE SEQUENCE [LARGE SCALE GENOMIC DNA]</scope>
</reference>
<reference key="4">
    <citation type="submission" date="2005-07" db="EMBL/GenBank/DDBJ databases">
        <authorList>
            <person name="Mural R.J."/>
            <person name="Istrail S."/>
            <person name="Sutton G."/>
            <person name="Florea L."/>
            <person name="Halpern A.L."/>
            <person name="Mobarry C.M."/>
            <person name="Lippert R."/>
            <person name="Walenz B."/>
            <person name="Shatkay H."/>
            <person name="Dew I."/>
            <person name="Miller J.R."/>
            <person name="Flanigan M.J."/>
            <person name="Edwards N.J."/>
            <person name="Bolanos R."/>
            <person name="Fasulo D."/>
            <person name="Halldorsson B.V."/>
            <person name="Hannenhalli S."/>
            <person name="Turner R."/>
            <person name="Yooseph S."/>
            <person name="Lu F."/>
            <person name="Nusskern D.R."/>
            <person name="Shue B.C."/>
            <person name="Zheng X.H."/>
            <person name="Zhong F."/>
            <person name="Delcher A.L."/>
            <person name="Huson D.H."/>
            <person name="Kravitz S.A."/>
            <person name="Mouchard L."/>
            <person name="Reinert K."/>
            <person name="Remington K.A."/>
            <person name="Clark A.G."/>
            <person name="Waterman M.S."/>
            <person name="Eichler E.E."/>
            <person name="Adams M.D."/>
            <person name="Hunkapiller M.W."/>
            <person name="Myers E.W."/>
            <person name="Venter J.C."/>
        </authorList>
    </citation>
    <scope>NUCLEOTIDE SEQUENCE [LARGE SCALE GENOMIC DNA]</scope>
</reference>
<reference key="5">
    <citation type="journal article" date="2004" name="Genome Res.">
        <title>The status, quality, and expansion of the NIH full-length cDNA project: the Mammalian Gene Collection (MGC).</title>
        <authorList>
            <consortium name="The MGC Project Team"/>
        </authorList>
    </citation>
    <scope>NUCLEOTIDE SEQUENCE [LARGE SCALE MRNA] OF 4-255 (ISOFORM 1)</scope>
    <source>
        <tissue>Lung</tissue>
    </source>
</reference>
<reference key="6">
    <citation type="journal article" date="2011" name="BMC Syst. Biol.">
        <title>Initial characterization of the human central proteome.</title>
        <authorList>
            <person name="Burkard T.R."/>
            <person name="Planyavsky M."/>
            <person name="Kaupe I."/>
            <person name="Breitwieser F.P."/>
            <person name="Buerckstuemmer T."/>
            <person name="Bennett K.L."/>
            <person name="Superti-Furga G."/>
            <person name="Colinge J."/>
        </authorList>
    </citation>
    <scope>IDENTIFICATION BY MASS SPECTROMETRY [LARGE SCALE ANALYSIS]</scope>
</reference>
<protein>
    <recommendedName>
        <fullName>BTB/POZ domain-containing protein KCTD14</fullName>
    </recommendedName>
</protein>
<keyword id="KW-0025">Alternative splicing</keyword>
<keyword id="KW-1267">Proteomics identification</keyword>
<keyword id="KW-1185">Reference proteome</keyword>
<sequence length="255" mass="29591">MWQGCAVERPVGRMTSQTPLPQSPRPRRPTMSTVVELNVGGEFHTTTLGTLRKFPGSKLAEMFSSLAKASTDAEGRFFIDRPSTYFRPILDYLRTGQVPTQHIPEVYREAQFYEIKPLVKLLEDMPQIFGEQVSRKQFLLQVPGYSENLELMVRLARAEAITARKSSVLVCLVETEEQDAYYSEVLCFLQDKKMFKSVVKFGPWKAVLDNSDLMHCLEMDIKAQGYKVFSKFYLTYPTKRNEFHFNIYSFTFTWW</sequence>
<name>KCD14_HUMAN</name>
<proteinExistence type="evidence at protein level"/>
<feature type="chain" id="PRO_0000191299" description="BTB/POZ domain-containing protein KCTD14">
    <location>
        <begin position="1"/>
        <end position="255"/>
    </location>
</feature>
<feature type="domain" description="BTB">
    <location>
        <begin position="33"/>
        <end position="130"/>
    </location>
</feature>
<feature type="region of interest" description="Disordered" evidence="1">
    <location>
        <begin position="1"/>
        <end position="29"/>
    </location>
</feature>
<feature type="splice variant" id="VSP_054562" description="In isoform 3b." evidence="2">
    <location>
        <begin position="1"/>
        <end position="30"/>
    </location>
</feature>
<comment type="interaction">
    <interactant intactId="EBI-10189448">
        <id>Q9BQ13</id>
    </interactant>
    <interactant intactId="EBI-10714818">
        <id>Q4G176</id>
        <label>ACSF3</label>
    </interactant>
    <organismsDiffer>false</organismsDiffer>
    <experiments>2</experiments>
</comment>
<comment type="interaction">
    <interactant intactId="EBI-10189448">
        <id>Q9BQ13</id>
    </interactant>
    <interactant intactId="EBI-749295">
        <id>O75716</id>
        <label>STK16</label>
    </interactant>
    <organismsDiffer>false</organismsDiffer>
    <experiments>4</experiments>
</comment>
<comment type="interaction">
    <interactant intactId="EBI-10189448">
        <id>Q9BQ13</id>
    </interactant>
    <interactant intactId="EBI-533224">
        <id>P15884</id>
        <label>TCF4</label>
    </interactant>
    <organismsDiffer>false</organismsDiffer>
    <experiments>3</experiments>
</comment>
<comment type="interaction">
    <interactant intactId="EBI-12278688">
        <id>Q9BQ13-2</id>
    </interactant>
    <interactant intactId="EBI-749295">
        <id>O75716</id>
        <label>STK16</label>
    </interactant>
    <organismsDiffer>false</organismsDiffer>
    <experiments>3</experiments>
</comment>
<comment type="alternative products">
    <event type="alternative splicing"/>
    <isoform>
        <id>Q9BQ13-1</id>
        <name>1</name>
        <sequence type="displayed"/>
    </isoform>
    <isoform>
        <id>Q9BQ13-2</id>
        <name>3b</name>
        <sequence type="described" ref="VSP_054562"/>
    </isoform>
    <isoform>
        <id>E9PQ53-1</id>
        <name>2</name>
        <name>NDUFC2-KCTD14</name>
        <sequence type="external"/>
    </isoform>
</comment>
<comment type="sequence caution" evidence="3">
    <conflict type="erroneous initiation">
        <sequence resource="EMBL-CDS" id="AAH01062"/>
    </conflict>
</comment>
<comment type="sequence caution" evidence="3">
    <conflict type="erroneous initiation">
        <sequence resource="EMBL-CDS" id="AAH01929"/>
    </conflict>
</comment>
<comment type="sequence caution" evidence="3">
    <conflict type="frameshift">
        <sequence resource="EMBL" id="BX359005"/>
    </conflict>
</comment>
<gene>
    <name type="primary">KCTD14</name>
</gene>
<evidence type="ECO:0000256" key="1">
    <source>
        <dbReference type="SAM" id="MobiDB-lite"/>
    </source>
</evidence>
<evidence type="ECO:0000303" key="2">
    <source>
    </source>
</evidence>
<evidence type="ECO:0000305" key="3"/>
<organism>
    <name type="scientific">Homo sapiens</name>
    <name type="common">Human</name>
    <dbReference type="NCBI Taxonomy" id="9606"/>
    <lineage>
        <taxon>Eukaryota</taxon>
        <taxon>Metazoa</taxon>
        <taxon>Chordata</taxon>
        <taxon>Craniata</taxon>
        <taxon>Vertebrata</taxon>
        <taxon>Euteleostomi</taxon>
        <taxon>Mammalia</taxon>
        <taxon>Eutheria</taxon>
        <taxon>Euarchontoglires</taxon>
        <taxon>Primates</taxon>
        <taxon>Haplorrhini</taxon>
        <taxon>Catarrhini</taxon>
        <taxon>Hominidae</taxon>
        <taxon>Homo</taxon>
    </lineage>
</organism>